<keyword id="KW-0067">ATP-binding</keyword>
<keyword id="KW-0436">Ligase</keyword>
<keyword id="KW-0547">Nucleotide-binding</keyword>
<keyword id="KW-0658">Purine biosynthesis</keyword>
<feature type="chain" id="PRO_1000018722" description="Phosphoribosylaminoimidazole-succinocarboxamide synthase">
    <location>
        <begin position="1"/>
        <end position="237"/>
    </location>
</feature>
<gene>
    <name evidence="1" type="primary">purC</name>
    <name type="ordered locus">lwe1790</name>
</gene>
<reference key="1">
    <citation type="journal article" date="2006" name="J. Bacteriol.">
        <title>Whole-genome sequence of Listeria welshimeri reveals common steps in genome reduction with Listeria innocua as compared to Listeria monocytogenes.</title>
        <authorList>
            <person name="Hain T."/>
            <person name="Steinweg C."/>
            <person name="Kuenne C.T."/>
            <person name="Billion A."/>
            <person name="Ghai R."/>
            <person name="Chatterjee S.S."/>
            <person name="Domann E."/>
            <person name="Kaerst U."/>
            <person name="Goesmann A."/>
            <person name="Bekel T."/>
            <person name="Bartels D."/>
            <person name="Kaiser O."/>
            <person name="Meyer F."/>
            <person name="Puehler A."/>
            <person name="Weisshaar B."/>
            <person name="Wehland J."/>
            <person name="Liang C."/>
            <person name="Dandekar T."/>
            <person name="Lampidis R."/>
            <person name="Kreft J."/>
            <person name="Goebel W."/>
            <person name="Chakraborty T."/>
        </authorList>
    </citation>
    <scope>NUCLEOTIDE SEQUENCE [LARGE SCALE GENOMIC DNA]</scope>
    <source>
        <strain>ATCC 35897 / DSM 20650 / CCUG 15529 / CIP 8149 / NCTC 11857 / SLCC 5334 / V8</strain>
    </source>
</reference>
<organism>
    <name type="scientific">Listeria welshimeri serovar 6b (strain ATCC 35897 / DSM 20650 / CCUG 15529 / CIP 8149 / NCTC 11857 / SLCC 5334 / V8)</name>
    <dbReference type="NCBI Taxonomy" id="386043"/>
    <lineage>
        <taxon>Bacteria</taxon>
        <taxon>Bacillati</taxon>
        <taxon>Bacillota</taxon>
        <taxon>Bacilli</taxon>
        <taxon>Bacillales</taxon>
        <taxon>Listeriaceae</taxon>
        <taxon>Listeria</taxon>
    </lineage>
</organism>
<proteinExistence type="inferred from homology"/>
<sequence length="237" mass="26946">MTNELVYEGKAKQLFKTEEAGVLRVAYKDDATALNGVRKESFAGKGELNNQITALIFSYLEEAGIRSHFIRAISETEQLVKEVSIIPLEVVVRNVIAGSLAKRLGKEEGEEIPSAIVEFYYKEDALDDPFINDDHVLYLEIATTNEMEVIRKAARSINEVLQVLFNQMNITLIDFKLEFGRDADGNILLADEISPDTCRLWDKETKQKLDKDVFRRNIGNLTDVYTEVLNRLKQVQN</sequence>
<accession>A0AJM6</accession>
<evidence type="ECO:0000255" key="1">
    <source>
        <dbReference type="HAMAP-Rule" id="MF_00137"/>
    </source>
</evidence>
<comment type="catalytic activity">
    <reaction evidence="1">
        <text>5-amino-1-(5-phospho-D-ribosyl)imidazole-4-carboxylate + L-aspartate + ATP = (2S)-2-[5-amino-1-(5-phospho-beta-D-ribosyl)imidazole-4-carboxamido]succinate + ADP + phosphate + 2 H(+)</text>
        <dbReference type="Rhea" id="RHEA:22628"/>
        <dbReference type="ChEBI" id="CHEBI:15378"/>
        <dbReference type="ChEBI" id="CHEBI:29991"/>
        <dbReference type="ChEBI" id="CHEBI:30616"/>
        <dbReference type="ChEBI" id="CHEBI:43474"/>
        <dbReference type="ChEBI" id="CHEBI:58443"/>
        <dbReference type="ChEBI" id="CHEBI:77657"/>
        <dbReference type="ChEBI" id="CHEBI:456216"/>
        <dbReference type="EC" id="6.3.2.6"/>
    </reaction>
</comment>
<comment type="pathway">
    <text evidence="1">Purine metabolism; IMP biosynthesis via de novo pathway; 5-amino-1-(5-phospho-D-ribosyl)imidazole-4-carboxamide from 5-amino-1-(5-phospho-D-ribosyl)imidazole-4-carboxylate: step 1/2.</text>
</comment>
<comment type="similarity">
    <text evidence="1">Belongs to the SAICAR synthetase family.</text>
</comment>
<dbReference type="EC" id="6.3.2.6" evidence="1"/>
<dbReference type="EMBL" id="AM263198">
    <property type="protein sequence ID" value="CAK21208.1"/>
    <property type="molecule type" value="Genomic_DNA"/>
</dbReference>
<dbReference type="RefSeq" id="WP_011702567.1">
    <property type="nucleotide sequence ID" value="NC_008555.1"/>
</dbReference>
<dbReference type="SMR" id="A0AJM6"/>
<dbReference type="STRING" id="386043.lwe1790"/>
<dbReference type="GeneID" id="61189688"/>
<dbReference type="KEGG" id="lwe:lwe1790"/>
<dbReference type="eggNOG" id="COG0152">
    <property type="taxonomic scope" value="Bacteria"/>
</dbReference>
<dbReference type="HOGENOM" id="CLU_061495_2_0_9"/>
<dbReference type="OrthoDB" id="9801549at2"/>
<dbReference type="UniPathway" id="UPA00074">
    <property type="reaction ID" value="UER00131"/>
</dbReference>
<dbReference type="Proteomes" id="UP000000779">
    <property type="component" value="Chromosome"/>
</dbReference>
<dbReference type="GO" id="GO:0005524">
    <property type="term" value="F:ATP binding"/>
    <property type="evidence" value="ECO:0007669"/>
    <property type="project" value="UniProtKB-KW"/>
</dbReference>
<dbReference type="GO" id="GO:0004639">
    <property type="term" value="F:phosphoribosylaminoimidazolesuccinocarboxamide synthase activity"/>
    <property type="evidence" value="ECO:0007669"/>
    <property type="project" value="UniProtKB-UniRule"/>
</dbReference>
<dbReference type="GO" id="GO:0006189">
    <property type="term" value="P:'de novo' IMP biosynthetic process"/>
    <property type="evidence" value="ECO:0007669"/>
    <property type="project" value="UniProtKB-UniRule"/>
</dbReference>
<dbReference type="GO" id="GO:0009236">
    <property type="term" value="P:cobalamin biosynthetic process"/>
    <property type="evidence" value="ECO:0007669"/>
    <property type="project" value="InterPro"/>
</dbReference>
<dbReference type="CDD" id="cd01415">
    <property type="entry name" value="SAICAR_synt_PurC"/>
    <property type="match status" value="1"/>
</dbReference>
<dbReference type="FunFam" id="3.30.470.20:FF:000006">
    <property type="entry name" value="Phosphoribosylaminoimidazole-succinocarboxamide synthase"/>
    <property type="match status" value="1"/>
</dbReference>
<dbReference type="Gene3D" id="3.30.470.20">
    <property type="entry name" value="ATP-grasp fold, B domain"/>
    <property type="match status" value="1"/>
</dbReference>
<dbReference type="Gene3D" id="3.30.200.20">
    <property type="entry name" value="Phosphorylase Kinase, domain 1"/>
    <property type="match status" value="1"/>
</dbReference>
<dbReference type="HAMAP" id="MF_00137">
    <property type="entry name" value="SAICAR_synth"/>
    <property type="match status" value="1"/>
</dbReference>
<dbReference type="InterPro" id="IPR028923">
    <property type="entry name" value="SAICAR_synt/ADE2_N"/>
</dbReference>
<dbReference type="InterPro" id="IPR033934">
    <property type="entry name" value="SAICAR_synt_PurC"/>
</dbReference>
<dbReference type="InterPro" id="IPR001636">
    <property type="entry name" value="SAICAR_synth"/>
</dbReference>
<dbReference type="InterPro" id="IPR050089">
    <property type="entry name" value="SAICAR_synthetase"/>
</dbReference>
<dbReference type="InterPro" id="IPR018236">
    <property type="entry name" value="SAICAR_synthetase_CS"/>
</dbReference>
<dbReference type="NCBIfam" id="TIGR00081">
    <property type="entry name" value="purC"/>
    <property type="match status" value="1"/>
</dbReference>
<dbReference type="PANTHER" id="PTHR43599">
    <property type="entry name" value="MULTIFUNCTIONAL PROTEIN ADE2"/>
    <property type="match status" value="1"/>
</dbReference>
<dbReference type="PANTHER" id="PTHR43599:SF3">
    <property type="entry name" value="SI:DKEY-6E2.2"/>
    <property type="match status" value="1"/>
</dbReference>
<dbReference type="Pfam" id="PF01259">
    <property type="entry name" value="SAICAR_synt"/>
    <property type="match status" value="1"/>
</dbReference>
<dbReference type="SUPFAM" id="SSF56104">
    <property type="entry name" value="SAICAR synthase-like"/>
    <property type="match status" value="1"/>
</dbReference>
<dbReference type="PROSITE" id="PS01057">
    <property type="entry name" value="SAICAR_SYNTHETASE_1"/>
    <property type="match status" value="1"/>
</dbReference>
<dbReference type="PROSITE" id="PS01058">
    <property type="entry name" value="SAICAR_SYNTHETASE_2"/>
    <property type="match status" value="1"/>
</dbReference>
<name>PUR7_LISW6</name>
<protein>
    <recommendedName>
        <fullName evidence="1">Phosphoribosylaminoimidazole-succinocarboxamide synthase</fullName>
        <ecNumber evidence="1">6.3.2.6</ecNumber>
    </recommendedName>
    <alternativeName>
        <fullName evidence="1">SAICAR synthetase</fullName>
    </alternativeName>
</protein>